<keyword id="KW-0240">DNA-directed RNA polymerase</keyword>
<keyword id="KW-0496">Mitochondrion</keyword>
<keyword id="KW-0548">Nucleotidyltransferase</keyword>
<keyword id="KW-0614">Plasmid</keyword>
<keyword id="KW-0804">Transcription</keyword>
<keyword id="KW-0808">Transferase</keyword>
<evidence type="ECO:0000250" key="1"/>
<evidence type="ECO:0000255" key="2">
    <source>
        <dbReference type="PROSITE-ProRule" id="PRU10031"/>
    </source>
</evidence>
<evidence type="ECO:0000255" key="3">
    <source>
        <dbReference type="PROSITE-ProRule" id="PRU10032"/>
    </source>
</evidence>
<evidence type="ECO:0000256" key="4">
    <source>
        <dbReference type="SAM" id="MobiDB-lite"/>
    </source>
</evidence>
<evidence type="ECO:0000305" key="5"/>
<reference key="1">
    <citation type="journal article" date="1983" name="Proc. Natl. Acad. Sci. U.S.A.">
        <title>Nucleotide sequence of the S-2 mitochondrial DNA from the S cytoplasm of maize.</title>
        <authorList>
            <person name="Levings C.S. III"/>
            <person name="Sederoff R.R."/>
        </authorList>
    </citation>
    <scope>NUCLEOTIDE SEQUENCE [GENOMIC DNA]</scope>
</reference>
<proteinExistence type="inferred from homology"/>
<feature type="chain" id="PRO_0000087756" description="Probable DNA-directed RNA polymerase">
    <location>
        <begin position="1"/>
        <end position="1098"/>
    </location>
</feature>
<feature type="region of interest" description="Disordered" evidence="4">
    <location>
        <begin position="1"/>
        <end position="26"/>
    </location>
</feature>
<feature type="compositionally biased region" description="Basic and acidic residues" evidence="4">
    <location>
        <begin position="1"/>
        <end position="24"/>
    </location>
</feature>
<feature type="active site" evidence="1">
    <location>
        <position position="663"/>
    </location>
</feature>
<feature type="active site" evidence="1">
    <location>
        <position position="750"/>
    </location>
</feature>
<feature type="active site" evidence="1">
    <location>
        <position position="915"/>
    </location>
</feature>
<organism>
    <name type="scientific">Zea mays</name>
    <name type="common">Maize</name>
    <dbReference type="NCBI Taxonomy" id="4577"/>
    <lineage>
        <taxon>Eukaryota</taxon>
        <taxon>Viridiplantae</taxon>
        <taxon>Streptophyta</taxon>
        <taxon>Embryophyta</taxon>
        <taxon>Tracheophyta</taxon>
        <taxon>Spermatophyta</taxon>
        <taxon>Magnoliopsida</taxon>
        <taxon>Liliopsida</taxon>
        <taxon>Poales</taxon>
        <taxon>Poaceae</taxon>
        <taxon>PACMAD clade</taxon>
        <taxon>Panicoideae</taxon>
        <taxon>Andropogonodae</taxon>
        <taxon>Andropogoneae</taxon>
        <taxon>Tripsacinae</taxon>
        <taxon>Zea</taxon>
    </lineage>
</organism>
<name>RPOP_MAIZE</name>
<sequence>PIRESVRVSTDRDPDLEDEKREQLGESMQTELERLTWGVEVGTSEDINVDTVKRWGLQNNKYNAEHWIPPGGQRTAEDMGKLYQFWDEFIETYENEVMMNSGYREPLNKDKVFNTLLDHSNNKTNQTAEELKGIQTKIERMTMYFYEANVYESLGQLKNKFINIDEQTAKDYLLDKLEKPDDLDIVRAMGTYTLECIVVFVLSKQFNVFALDKASVQVATLVSELDSAAKIEYNRIIAEDRKRKKAKWGDKQINEDENILLQDKGVDTFNGDVHSELDRKKKSISKQTNRKRVRISKHKEPGIGEALFGWLASRKLIEVKKPVFLFDKKNKKPKNVIYPGYVDCLFDIKDLPFCSTLPMVYPPADWELWPTATAEVSDPYITNLTPLSSYRGGYLTSLQRESGDSPTLLSEKDYGVFDIHIDRERSQPVLSAVKKLQWQPYRINKLVYDFIQKHWSVLVSVGLLRPKNLALFKRKEALRLLSSLLFKHEELSTIYRYSELKSVLLKNIHASTFELYTMKIAEAYLDYKIYFPIFLDFRGRNYRHGPFHFHERDLVRSLIIFDESDDSAAHTINSDVGDRILHNFLISAAYHKSKFGVYREALEFIYNKIEDMQSKPTFFEKDIFVDTLCCRHPFQYISSCISLKTYADTKDLSVLRYTPVFQDASASAYQIMSYFLLDIDYGIHTNLLKKTNTDGRYIRDIYEFMWGCLIKYLIAEEKIELAIKLLTPNEKDQESVLAKIVSIFDRNVVKKMFMPMMYGKTDYTLKKDVEDLLKGKSDSEGINLISKHISTYWKVNFGKMKDLMDLINYVSWFGAGQDKPVVYSTPYWVTLQTYKWRKRVKMKIQYETTKNNEKEVKTTSAKMLIPLNDNDIRKSSTSTFANFIHQKDAFTAIQLVDFINKLENASSIPIYAVHDNFITMPEYASILPTLYRDSIFRMGHPLIIINKFLFDHILIPAIQNEHPQNKHLFSVEERSMLDRMMIDLQNPLIPDFGSVDITKARIKSIVIPKDLLLKCFSCLWMSKTKKISLVRWESCRDKIIKVYMRYTDDISSDEGVSRWLEYKNNLEFASDPVWSSDNTNGTQADSLDKGEDDYCIHY</sequence>
<protein>
    <recommendedName>
        <fullName>Probable DNA-directed RNA polymerase</fullName>
        <ecNumber>2.7.7.6</ecNumber>
    </recommendedName>
    <alternativeName>
        <fullName>S-2 DNA ORF1</fullName>
    </alternativeName>
</protein>
<accession>P10581</accession>
<geneLocation type="mitochondrion"/>
<geneLocation type="plasmid">
    <name>S-2</name>
</geneLocation>
<comment type="function">
    <text>DNA-dependent RNA polymerase catalyzes the transcription of DNA into RNA using the four ribonucleoside triphosphates as substrates.</text>
</comment>
<comment type="catalytic activity">
    <reaction evidence="2 3">
        <text>RNA(n) + a ribonucleoside 5'-triphosphate = RNA(n+1) + diphosphate</text>
        <dbReference type="Rhea" id="RHEA:21248"/>
        <dbReference type="Rhea" id="RHEA-COMP:14527"/>
        <dbReference type="Rhea" id="RHEA-COMP:17342"/>
        <dbReference type="ChEBI" id="CHEBI:33019"/>
        <dbReference type="ChEBI" id="CHEBI:61557"/>
        <dbReference type="ChEBI" id="CHEBI:140395"/>
        <dbReference type="EC" id="2.7.7.6"/>
    </reaction>
</comment>
<comment type="subcellular location">
    <subcellularLocation>
        <location evidence="5">Mitochondrion</location>
    </subcellularLocation>
</comment>
<comment type="miscellaneous">
    <text>The mitochondria from the S male-sterile cytoplasm of maize contain unique DNA-protein complexes, designated S-1 and S-2. These complexes consist of double-stranded linear DNAs with proteins covalently attached to the 5'-termini.</text>
</comment>
<comment type="similarity">
    <text evidence="5">Belongs to the phage and mitochondrial RNA polymerase family.</text>
</comment>
<dbReference type="EC" id="2.7.7.6"/>
<dbReference type="EMBL" id="J01426">
    <property type="status" value="NOT_ANNOTATED_CDS"/>
    <property type="molecule type" value="Genomic_DNA"/>
</dbReference>
<dbReference type="PaxDb" id="4577-GRMZM5G827309_P01"/>
<dbReference type="MaizeGDB" id="69623"/>
<dbReference type="eggNOG" id="KOG1038">
    <property type="taxonomic scope" value="Eukaryota"/>
</dbReference>
<dbReference type="ExpressionAtlas" id="P10581">
    <property type="expression patterns" value="baseline"/>
</dbReference>
<dbReference type="GO" id="GO:0034245">
    <property type="term" value="C:mitochondrial DNA-directed RNA polymerase complex"/>
    <property type="evidence" value="ECO:0000318"/>
    <property type="project" value="GO_Central"/>
</dbReference>
<dbReference type="GO" id="GO:0009536">
    <property type="term" value="C:plastid"/>
    <property type="evidence" value="ECO:0007669"/>
    <property type="project" value="GOC"/>
</dbReference>
<dbReference type="GO" id="GO:0003677">
    <property type="term" value="F:DNA binding"/>
    <property type="evidence" value="ECO:0007669"/>
    <property type="project" value="InterPro"/>
</dbReference>
<dbReference type="GO" id="GO:0003899">
    <property type="term" value="F:DNA-directed RNA polymerase activity"/>
    <property type="evidence" value="ECO:0000318"/>
    <property type="project" value="GO_Central"/>
</dbReference>
<dbReference type="GO" id="GO:0006390">
    <property type="term" value="P:mitochondrial transcription"/>
    <property type="evidence" value="ECO:0000318"/>
    <property type="project" value="GO_Central"/>
</dbReference>
<dbReference type="Gene3D" id="1.10.150.20">
    <property type="entry name" value="5' to 3' exonuclease, C-terminal subdomain"/>
    <property type="match status" value="1"/>
</dbReference>
<dbReference type="InterPro" id="IPR046950">
    <property type="entry name" value="DNA-dir_Rpol_C_phage-type"/>
</dbReference>
<dbReference type="InterPro" id="IPR002092">
    <property type="entry name" value="DNA-dir_Rpol_phage-type"/>
</dbReference>
<dbReference type="InterPro" id="IPR043502">
    <property type="entry name" value="DNA/RNA_pol_sf"/>
</dbReference>
<dbReference type="PANTHER" id="PTHR10102">
    <property type="entry name" value="DNA-DIRECTED RNA POLYMERASE, MITOCHONDRIAL"/>
    <property type="match status" value="1"/>
</dbReference>
<dbReference type="PANTHER" id="PTHR10102:SF8">
    <property type="entry name" value="DNA-DIRECTED RNA POLYMERASE-RELATED"/>
    <property type="match status" value="1"/>
</dbReference>
<dbReference type="Pfam" id="PF00940">
    <property type="entry name" value="RNA_pol"/>
    <property type="match status" value="1"/>
</dbReference>
<dbReference type="SUPFAM" id="SSF56672">
    <property type="entry name" value="DNA/RNA polymerases"/>
    <property type="match status" value="1"/>
</dbReference>
<dbReference type="PROSITE" id="PS00900">
    <property type="entry name" value="RNA_POL_PHAGE_1"/>
    <property type="match status" value="1"/>
</dbReference>
<dbReference type="PROSITE" id="PS00489">
    <property type="entry name" value="RNA_POL_PHAGE_2"/>
    <property type="match status" value="1"/>
</dbReference>